<protein>
    <recommendedName>
        <fullName>ADP-ribosyl cyclase/cyclic ADP-ribose hydrolase 1</fullName>
        <ecNumber evidence="7 8">3.2.2.-</ecNumber>
        <ecNumber evidence="8">3.2.2.6</ecNumber>
    </recommendedName>
    <alternativeName>
        <fullName>2'-phospho-ADP-ribosyl cyclase</fullName>
    </alternativeName>
    <alternativeName>
        <fullName>2'-phospho-ADP-ribosyl cyclase/2'-phospho-cyclic-ADP-ribose transferase</fullName>
        <ecNumber evidence="14">2.4.99.20</ecNumber>
    </alternativeName>
    <alternativeName>
        <fullName>2'-phospho-cyclic-ADP-ribose transferase</fullName>
    </alternativeName>
    <alternativeName>
        <fullName>ADP-ribosyl cyclase 1</fullName>
        <shortName>ADPRC 1</shortName>
    </alternativeName>
    <alternativeName>
        <fullName>Cyclic ADP-ribose hydrolase 1</fullName>
        <shortName>cADPR hydrolase 1</shortName>
    </alternativeName>
    <alternativeName>
        <fullName>T10</fullName>
    </alternativeName>
    <cdAntigenName>CD38</cdAntigenName>
</protein>
<feature type="chain" id="PRO_0000144066" description="ADP-ribosyl cyclase/cyclic ADP-ribose hydrolase 1">
    <location>
        <begin position="1"/>
        <end position="300"/>
    </location>
</feature>
<feature type="topological domain" description="Cytoplasmic" evidence="1">
    <location>
        <begin position="1"/>
        <end position="21"/>
    </location>
</feature>
<feature type="transmembrane region" description="Helical; Signal-anchor for type II membrane protein" evidence="1">
    <location>
        <begin position="22"/>
        <end position="42"/>
    </location>
</feature>
<feature type="topological domain" description="Extracellular" evidence="1">
    <location>
        <begin position="43"/>
        <end position="300"/>
    </location>
</feature>
<feature type="active site" evidence="15">
    <location>
        <position position="119"/>
    </location>
</feature>
<feature type="active site" evidence="15">
    <location>
        <position position="201"/>
    </location>
</feature>
<feature type="glycosylation site" description="N-linked (GlcNAc...) asparagine" evidence="4">
    <location>
        <position position="100"/>
    </location>
</feature>
<feature type="glycosylation site" description="N-linked (GlcNAc...) asparagine" evidence="1">
    <location>
        <position position="164"/>
    </location>
</feature>
<feature type="glycosylation site" description="N-linked (GlcNAc...) asparagine" evidence="4">
    <location>
        <position position="209"/>
    </location>
</feature>
<feature type="glycosylation site" description="N-linked (GlcNAc...) asparagine" evidence="4 5">
    <location>
        <position position="219"/>
    </location>
</feature>
<feature type="disulfide bond" evidence="2">
    <location>
        <begin position="67"/>
        <end position="82"/>
    </location>
</feature>
<feature type="disulfide bond" evidence="2">
    <location>
        <begin position="99"/>
        <end position="180"/>
    </location>
</feature>
<feature type="disulfide bond" evidence="2">
    <location>
        <begin position="160"/>
        <end position="173"/>
    </location>
</feature>
<feature type="disulfide bond" evidence="2">
    <location>
        <begin position="254"/>
        <end position="275"/>
    </location>
</feature>
<feature type="disulfide bond" evidence="2">
    <location>
        <begin position="287"/>
        <end position="296"/>
    </location>
</feature>
<feature type="splice variant" id="VSP_000707" description="In isoform 2." evidence="11">
    <original>I</original>
    <variation>K</variation>
    <location>
        <position position="122"/>
    </location>
</feature>
<feature type="splice variant" id="VSP_000708" description="In isoform 2." evidence="11">
    <location>
        <begin position="123"/>
        <end position="300"/>
    </location>
</feature>
<feature type="sequence variant" id="VAR_001323" description="Seems to contribute to the development of type II diabetes; 50% reduction in activity; dbSNP:rs1800561." evidence="10">
    <original>R</original>
    <variation>W</variation>
    <location>
        <position position="140"/>
    </location>
</feature>
<feature type="mutagenesis site" description="Loss of cADPR hydrolase activity." evidence="7">
    <original>C</original>
    <variation>K</variation>
    <location>
        <position position="119"/>
    </location>
</feature>
<feature type="mutagenesis site" description="Loss of cADPR hydrolase and ADP-ribosyl cyclase activity." evidence="7">
    <original>C</original>
    <variation>R</variation>
    <variation>E</variation>
    <variation>A</variation>
    <location>
        <position position="119"/>
    </location>
</feature>
<feature type="mutagenesis site" description="Loss of cADPR hydrolase and ADP-ribosyl cyclase activity." evidence="7">
    <original>C</original>
    <variation>A</variation>
    <location>
        <position position="160"/>
    </location>
</feature>
<feature type="mutagenesis site" description="Loss of cADPR hydrolase and ADP-ribosyl cyclase activity." evidence="7">
    <original>C</original>
    <variation>A</variation>
    <location>
        <position position="173"/>
    </location>
</feature>
<feature type="mutagenesis site" description="Loss of cADPR hydrolase and ADP-ribosyl cyclase activity." evidence="7">
    <original>C</original>
    <variation>D</variation>
    <variation>K</variation>
    <variation>A</variation>
    <location>
        <position position="201"/>
    </location>
</feature>
<feature type="mutagenesis site" description="Loss of cADPR hydrolase activity." evidence="7">
    <original>C</original>
    <variation>E</variation>
    <location>
        <position position="201"/>
    </location>
</feature>
<feature type="sequence conflict" description="In Ref. 1; AAA68482." evidence="12" ref="1">
    <original>Q</original>
    <variation>T</variation>
    <location>
        <position position="49"/>
    </location>
</feature>
<feature type="strand" evidence="18">
    <location>
        <begin position="51"/>
        <end position="53"/>
    </location>
</feature>
<feature type="helix" evidence="18">
    <location>
        <begin position="59"/>
        <end position="73"/>
    </location>
</feature>
<feature type="helix" evidence="16">
    <location>
        <begin position="75"/>
        <end position="77"/>
    </location>
</feature>
<feature type="helix" evidence="18">
    <location>
        <begin position="82"/>
        <end position="93"/>
    </location>
</feature>
<feature type="strand" evidence="19">
    <location>
        <begin position="94"/>
        <end position="96"/>
    </location>
</feature>
<feature type="helix" evidence="18">
    <location>
        <begin position="98"/>
        <end position="100"/>
    </location>
</feature>
<feature type="helix" evidence="18">
    <location>
        <begin position="103"/>
        <end position="106"/>
    </location>
</feature>
<feature type="helix" evidence="18">
    <location>
        <begin position="107"/>
        <end position="112"/>
    </location>
</feature>
<feature type="helix" evidence="18">
    <location>
        <begin position="119"/>
        <end position="121"/>
    </location>
</feature>
<feature type="strand" evidence="16">
    <location>
        <begin position="122"/>
        <end position="127"/>
    </location>
</feature>
<feature type="strand" evidence="18">
    <location>
        <begin position="132"/>
        <end position="134"/>
    </location>
</feature>
<feature type="helix" evidence="18">
    <location>
        <begin position="136"/>
        <end position="141"/>
    </location>
</feature>
<feature type="strand" evidence="19">
    <location>
        <begin position="142"/>
        <end position="144"/>
    </location>
</feature>
<feature type="helix" evidence="18">
    <location>
        <begin position="145"/>
        <end position="147"/>
    </location>
</feature>
<feature type="helix" evidence="18">
    <location>
        <begin position="149"/>
        <end position="154"/>
    </location>
</feature>
<feature type="strand" evidence="18">
    <location>
        <begin position="165"/>
        <end position="167"/>
    </location>
</feature>
<feature type="strand" evidence="18">
    <location>
        <begin position="171"/>
        <end position="173"/>
    </location>
</feature>
<feature type="turn" evidence="18">
    <location>
        <begin position="176"/>
        <end position="179"/>
    </location>
</feature>
<feature type="strand" evidence="18">
    <location>
        <begin position="181"/>
        <end position="183"/>
    </location>
</feature>
<feature type="helix" evidence="18">
    <location>
        <begin position="184"/>
        <end position="199"/>
    </location>
</feature>
<feature type="strand" evidence="18">
    <location>
        <begin position="202"/>
        <end position="209"/>
    </location>
</feature>
<feature type="strand" evidence="18">
    <location>
        <begin position="212"/>
        <end position="216"/>
    </location>
</feature>
<feature type="strand" evidence="21">
    <location>
        <begin position="218"/>
        <end position="220"/>
    </location>
</feature>
<feature type="helix" evidence="18">
    <location>
        <begin position="221"/>
        <end position="224"/>
    </location>
</feature>
<feature type="helix" evidence="18">
    <location>
        <begin position="227"/>
        <end position="229"/>
    </location>
</feature>
<feature type="turn" evidence="18">
    <location>
        <begin position="232"/>
        <end position="234"/>
    </location>
</feature>
<feature type="strand" evidence="18">
    <location>
        <begin position="235"/>
        <end position="243"/>
    </location>
</feature>
<feature type="strand" evidence="18">
    <location>
        <begin position="246"/>
        <end position="249"/>
    </location>
</feature>
<feature type="helix" evidence="18">
    <location>
        <begin position="253"/>
        <end position="255"/>
    </location>
</feature>
<feature type="helix" evidence="18">
    <location>
        <begin position="257"/>
        <end position="268"/>
    </location>
</feature>
<feature type="strand" evidence="18">
    <location>
        <begin position="272"/>
        <end position="278"/>
    </location>
</feature>
<feature type="helix" evidence="16">
    <location>
        <begin position="281"/>
        <end position="289"/>
    </location>
</feature>
<feature type="turn" evidence="17">
    <location>
        <begin position="291"/>
        <end position="293"/>
    </location>
</feature>
<feature type="helix" evidence="20">
    <location>
        <begin position="294"/>
        <end position="296"/>
    </location>
</feature>
<sequence>MANCEFSPVSGDKPCCRLSRRAQLCLGVSILVLILVVVLAVVVPRWRQQWSGPGTTKRFPETVLARCVKYTEIHPEMRHVDCQSVWDAFKGAFISKHPCNITEEDYQPLMKLGTQTVPCNKILLWSRIKDLAHQFTQVQRDMFTLEDTLLGYLADDLTWCGEFNTSKINYQSCPDWRKDCSNNPVSVFWKTVSRRFAEAACDVVHVMLNGSRSKIFDKNSTFGSVEVHNLQPEKVQTLEAWVIHGGREDSRDLCQDPTIKELESIISKRNIQFSCKNIYRPDKFLQCVKNPEDSSCTSEI</sequence>
<proteinExistence type="evidence at protein level"/>
<evidence type="ECO:0000255" key="1"/>
<evidence type="ECO:0000269" key="2">
    <source>
    </source>
</evidence>
<evidence type="ECO:0000269" key="3">
    <source>
    </source>
</evidence>
<evidence type="ECO:0000269" key="4">
    <source>
    </source>
</evidence>
<evidence type="ECO:0000269" key="5">
    <source>
    </source>
</evidence>
<evidence type="ECO:0000269" key="6">
    <source>
    </source>
</evidence>
<evidence type="ECO:0000269" key="7">
    <source>
    </source>
</evidence>
<evidence type="ECO:0000269" key="8">
    <source>
    </source>
</evidence>
<evidence type="ECO:0000269" key="9">
    <source>
    </source>
</evidence>
<evidence type="ECO:0000269" key="10">
    <source>
    </source>
</evidence>
<evidence type="ECO:0000303" key="11">
    <source>
    </source>
</evidence>
<evidence type="ECO:0000305" key="12"/>
<evidence type="ECO:0000305" key="13">
    <source>
    </source>
</evidence>
<evidence type="ECO:0000305" key="14">
    <source>
    </source>
</evidence>
<evidence type="ECO:0000305" key="15">
    <source>
    </source>
</evidence>
<evidence type="ECO:0007829" key="16">
    <source>
        <dbReference type="PDB" id="2O3S"/>
    </source>
</evidence>
<evidence type="ECO:0007829" key="17">
    <source>
        <dbReference type="PDB" id="3DZG"/>
    </source>
</evidence>
<evidence type="ECO:0007829" key="18">
    <source>
        <dbReference type="PDB" id="3F6Y"/>
    </source>
</evidence>
<evidence type="ECO:0007829" key="19">
    <source>
        <dbReference type="PDB" id="3RAJ"/>
    </source>
</evidence>
<evidence type="ECO:0007829" key="20">
    <source>
        <dbReference type="PDB" id="5F21"/>
    </source>
</evidence>
<evidence type="ECO:0007829" key="21">
    <source>
        <dbReference type="PDB" id="8VAU"/>
    </source>
</evidence>
<reference key="1">
    <citation type="journal article" date="1990" name="J. Immunol.">
        <title>Isolation of a cDNA encoding the human CD38 (T10) molecule, a cell surface glycoprotein with an unusual discontinuous pattern of expression during lymphocyte differentiation.</title>
        <authorList>
            <person name="Jackson D.G."/>
            <person name="Bell J.I."/>
        </authorList>
    </citation>
    <scope>NUCLEOTIDE SEQUENCE [MRNA] (ISOFORM 1)</scope>
    <scope>SUBCELLULAR LOCATION</scope>
</reference>
<reference key="2">
    <citation type="journal article" date="1997" name="Gene">
        <title>Human gene encoding CD38 (ADP-ribosyl cyclase/cyclic ADP-ribose hydrolase): organization, nucleotide sequence and alternative splicing.</title>
        <authorList>
            <person name="Nata K."/>
            <person name="Takamura T."/>
            <person name="Karasawa T."/>
            <person name="Kumagai T."/>
            <person name="Hashioka W."/>
            <person name="Tohgo A."/>
            <person name="Yonekura H."/>
            <person name="Takasawa S."/>
            <person name="Nakamura S."/>
            <person name="Okamoto H."/>
        </authorList>
    </citation>
    <scope>NUCLEOTIDE SEQUENCE [GENOMIC DNA]</scope>
    <scope>NUCLEOTIDE SEQUENCE [MRNA] (ISOFORMS 1 AND 2)</scope>
    <scope>TISSUE SPECIFICITY</scope>
    <source>
        <tissue>Esophageal carcinoma</tissue>
        <tissue>Pancreas</tissue>
    </source>
</reference>
<reference key="3">
    <citation type="journal article" date="2004" name="Genome Res.">
        <title>The status, quality, and expansion of the NIH full-length cDNA project: the Mammalian Gene Collection (MGC).</title>
        <authorList>
            <consortium name="The MGC Project Team"/>
        </authorList>
    </citation>
    <scope>NUCLEOTIDE SEQUENCE [LARGE SCALE MRNA] (ISOFORM 1)</scope>
    <source>
        <tissue>B-cell</tissue>
    </source>
</reference>
<reference key="4">
    <citation type="journal article" date="1992" name="Trends Biochem. Sci.">
        <title>Similarities in amino acid sequences of Aplysia ADP-ribosyl cyclase and human lymphocyte antigen CD38.</title>
        <authorList>
            <person name="States D.J."/>
            <person name="Walseth T.F."/>
            <person name="Lee H.C."/>
        </authorList>
    </citation>
    <scope>SIMILARITY TO NADASE</scope>
</reference>
<reference key="5">
    <citation type="journal article" date="1993" name="J. Biol. Chem.">
        <title>Synthesis and hydrolysis of cyclic ADP-ribose by human leukocyte antigen CD38 and inhibition of the hydrolysis by ATP.</title>
        <authorList>
            <person name="Takasawa S."/>
            <person name="Tohgo A."/>
            <person name="Noguchi N."/>
            <person name="Koguma T."/>
            <person name="Nata K."/>
            <person name="Sugimoto T."/>
            <person name="Yonekura H."/>
            <person name="Okamoto H."/>
        </authorList>
    </citation>
    <scope>FUNCTION</scope>
    <scope>CATALYTIC ACTIVITY</scope>
    <scope>ACTIVITY REGULATION</scope>
    <scope>SUBCELLULAR LOCATION</scope>
    <scope>TISSUE SPECIFICITY</scope>
</reference>
<reference key="6">
    <citation type="journal article" date="1994" name="J. Biol. Chem.">
        <title>Essential cysteine residues for cyclic ADP-ribose synthesis and hydrolysis by CD38.</title>
        <authorList>
            <person name="Tohgo A."/>
            <person name="Takasawa S."/>
            <person name="Noguchi N."/>
            <person name="Koguma T."/>
            <person name="Nata K."/>
            <person name="Sugimoto T."/>
            <person name="Furuya Y."/>
            <person name="Yonekura H."/>
            <person name="Okamoto H."/>
        </authorList>
    </citation>
    <scope>FUNCTION</scope>
    <scope>CATALYTIC ACTIVITY</scope>
    <scope>POSSIBLE ACTIVE SITE</scope>
    <scope>MUTAGENESIS OF CYS-119; CYS-160; CYS-173 AND CYS-201</scope>
</reference>
<reference key="7">
    <citation type="journal article" date="2004" name="Genome Biol.">
        <title>An unappreciated role for RNA surveillance.</title>
        <authorList>
            <person name="Hillman R.T."/>
            <person name="Green R.E."/>
            <person name="Brenner S.E."/>
        </authorList>
    </citation>
    <scope>SPLICE ISOFORM(S) THAT ARE POTENTIAL NMD TARGET(S)</scope>
</reference>
<reference key="8">
    <citation type="journal article" date="2006" name="Biochem. Biophys. Res. Commun.">
        <title>NAADP+ synthesis from cADPRP and nicotinic acid by ADP-ribosyl cyclases.</title>
        <authorList>
            <person name="Moreschi I."/>
            <person name="Bruzzone S."/>
            <person name="Melone L."/>
            <person name="De Flora A."/>
            <person name="Zocchi E."/>
        </authorList>
    </citation>
    <scope>FUNCTION</scope>
    <scope>CATALYTIC ACTIVITY</scope>
    <scope>BIOPHYSICOCHEMICAL PROPERTIES</scope>
</reference>
<reference key="9">
    <citation type="journal article" date="2009" name="J. Proteome Res.">
        <title>Glycoproteomics analysis of human liver tissue by combination of multiple enzyme digestion and hydrazide chemistry.</title>
        <authorList>
            <person name="Chen R."/>
            <person name="Jiang X."/>
            <person name="Sun D."/>
            <person name="Han G."/>
            <person name="Wang F."/>
            <person name="Ye M."/>
            <person name="Wang L."/>
            <person name="Zou H."/>
        </authorList>
    </citation>
    <scope>GLYCOSYLATION [LARGE SCALE ANALYSIS] AT ASN-100; ASN-209 AND ASN-219</scope>
    <source>
        <tissue>Liver</tissue>
    </source>
</reference>
<reference key="10">
    <citation type="journal article" date="2009" name="Nat. Biotechnol.">
        <title>Mass-spectrometric identification and relative quantification of N-linked cell surface glycoproteins.</title>
        <authorList>
            <person name="Wollscheid B."/>
            <person name="Bausch-Fluck D."/>
            <person name="Henderson C."/>
            <person name="O'Brien R."/>
            <person name="Bibel M."/>
            <person name="Schiess R."/>
            <person name="Aebersold R."/>
            <person name="Watts J.D."/>
        </authorList>
    </citation>
    <scope>GLYCOSYLATION [LARGE SCALE ANALYSIS] AT ASN-219</scope>
    <source>
        <tissue>Leukemic T-cell</tissue>
    </source>
</reference>
<reference key="11">
    <citation type="journal article" date="2011" name="BMC Syst. Biol.">
        <title>Initial characterization of the human central proteome.</title>
        <authorList>
            <person name="Burkard T.R."/>
            <person name="Planyavsky M."/>
            <person name="Kaupe I."/>
            <person name="Breitwieser F.P."/>
            <person name="Buerckstuemmer T."/>
            <person name="Bennett K.L."/>
            <person name="Superti-Furga G."/>
            <person name="Colinge J."/>
        </authorList>
    </citation>
    <scope>IDENTIFICATION BY MASS SPECTROMETRY [LARGE SCALE ANALYSIS]</scope>
</reference>
<reference key="12">
    <citation type="journal article" date="2015" name="Proteomics">
        <title>N-terminome analysis of the human mitochondrial proteome.</title>
        <authorList>
            <person name="Vaca Jacome A.S."/>
            <person name="Rabilloud T."/>
            <person name="Schaeffer-Reiss C."/>
            <person name="Rompais M."/>
            <person name="Ayoub D."/>
            <person name="Lane L."/>
            <person name="Bairoch A."/>
            <person name="Van Dorsselaer A."/>
            <person name="Carapito C."/>
        </authorList>
    </citation>
    <scope>IDENTIFICATION BY MASS SPECTROMETRY [LARGE SCALE ANALYSIS]</scope>
</reference>
<reference key="13">
    <citation type="journal article" date="2005" name="Structure">
        <title>Crystal structure of human CD38 extracellular domain.</title>
        <authorList>
            <person name="Liu Q."/>
            <person name="Kriksunov I.A."/>
            <person name="Graeff R."/>
            <person name="Munshi C."/>
            <person name="Lee H.C."/>
            <person name="Hao Q."/>
        </authorList>
    </citation>
    <scope>X-RAY CRYSTALLOGRAPHY (1.91 ANGSTROMS) OF 45-300</scope>
    <scope>SUBUNIT</scope>
    <scope>DISULFIDE BONDS</scope>
</reference>
<reference key="14">
    <citation type="journal article" date="1998" name="Diabetologia">
        <title>A missense mutation in the CD38 gene, a novel factor for insulin secretion: association with Type II diabetes mellitus in Japanese subjects and evidence of abnormal function when expressed in vitro.</title>
        <authorList>
            <person name="Yagui K."/>
            <person name="Shimada F."/>
            <person name="Mimura M."/>
            <person name="Hashimoto N."/>
            <person name="Suzuki Y."/>
            <person name="Tokuyama Y."/>
            <person name="Nata K."/>
            <person name="Tohgo A."/>
            <person name="Ikehata F."/>
            <person name="Takasawa S."/>
            <person name="Okamoto H."/>
            <person name="Makino H."/>
            <person name="Saito Y."/>
            <person name="Kanatsuka A."/>
        </authorList>
    </citation>
    <scope>VARIANT TRP-140</scope>
</reference>
<organism>
    <name type="scientific">Homo sapiens</name>
    <name type="common">Human</name>
    <dbReference type="NCBI Taxonomy" id="9606"/>
    <lineage>
        <taxon>Eukaryota</taxon>
        <taxon>Metazoa</taxon>
        <taxon>Chordata</taxon>
        <taxon>Craniata</taxon>
        <taxon>Vertebrata</taxon>
        <taxon>Euteleostomi</taxon>
        <taxon>Mammalia</taxon>
        <taxon>Eutheria</taxon>
        <taxon>Euarchontoglires</taxon>
        <taxon>Primates</taxon>
        <taxon>Haplorrhini</taxon>
        <taxon>Catarrhini</taxon>
        <taxon>Hominidae</taxon>
        <taxon>Homo</taxon>
    </lineage>
</organism>
<accession>P28907</accession>
<accession>O00121</accession>
<accession>O00122</accession>
<accession>Q96HY4</accession>
<gene>
    <name type="primary">CD38</name>
</gene>
<comment type="function">
    <text evidence="3 7 8">Synthesizes cyclic ADP-ribose (cADPR), a second messenger for glucose-induced insulin secretion (PubMed:7961800, PubMed:8253715). Synthesizes the Ca(2+) mobilizer nicotinate-adenine dinucleotide phosphate, NAADP(+), from 2'-phospho-cADPR and nicotinic acid, as well as from NADP(+) and nicotinic acid. At both pH 5.0 and pH 7.4 preferentially transforms 2'-phospho-cADPR into NAADP(+), while preferentially cleaving NADP(+) to cADPR and ADPRP rather than into NADDP(+) (PubMed:16690024). Has cADPR hydrolase activity (PubMed:7961800, PubMed:8253715).</text>
</comment>
<comment type="catalytic activity">
    <reaction evidence="3">
        <text>2'-phospho-cyclic ADP-ribose + nicotinate = nicotinate-adenine dinucleotide phosphate</text>
        <dbReference type="Rhea" id="RHEA:38607"/>
        <dbReference type="ChEBI" id="CHEBI:32544"/>
        <dbReference type="ChEBI" id="CHEBI:75967"/>
        <dbReference type="ChEBI" id="CHEBI:75970"/>
    </reaction>
    <physiologicalReaction direction="left-to-right" evidence="3">
        <dbReference type="Rhea" id="RHEA:38608"/>
    </physiologicalReaction>
    <physiologicalReaction direction="right-to-left" evidence="3">
        <dbReference type="Rhea" id="RHEA:38609"/>
    </physiologicalReaction>
</comment>
<comment type="catalytic activity">
    <reaction evidence="7 8">
        <text>NAD(+) = cyclic ADP-beta-D-ribose + nicotinamide + H(+)</text>
        <dbReference type="Rhea" id="RHEA:38611"/>
        <dbReference type="ChEBI" id="CHEBI:15378"/>
        <dbReference type="ChEBI" id="CHEBI:17154"/>
        <dbReference type="ChEBI" id="CHEBI:57540"/>
        <dbReference type="ChEBI" id="CHEBI:73672"/>
    </reaction>
    <physiologicalReaction direction="left-to-right" evidence="8">
        <dbReference type="Rhea" id="RHEA:38612"/>
    </physiologicalReaction>
</comment>
<comment type="catalytic activity">
    <reaction evidence="3 8">
        <text>NAD(+) + H2O = ADP-D-ribose + nicotinamide + H(+)</text>
        <dbReference type="Rhea" id="RHEA:16301"/>
        <dbReference type="ChEBI" id="CHEBI:15377"/>
        <dbReference type="ChEBI" id="CHEBI:15378"/>
        <dbReference type="ChEBI" id="CHEBI:17154"/>
        <dbReference type="ChEBI" id="CHEBI:57540"/>
        <dbReference type="ChEBI" id="CHEBI:57967"/>
        <dbReference type="EC" id="3.2.2.6"/>
    </reaction>
</comment>
<comment type="catalytic activity">
    <reaction evidence="7 8">
        <text>cyclic ADP-beta-D-ribose + H2O = ADP-D-ribose</text>
        <dbReference type="Rhea" id="RHEA:38615"/>
        <dbReference type="ChEBI" id="CHEBI:15377"/>
        <dbReference type="ChEBI" id="CHEBI:57967"/>
        <dbReference type="ChEBI" id="CHEBI:73672"/>
    </reaction>
    <physiologicalReaction direction="left-to-right" evidence="8">
        <dbReference type="Rhea" id="RHEA:38616"/>
    </physiologicalReaction>
</comment>
<comment type="catalytic activity">
    <reaction evidence="3">
        <text>NADP(+) = 2'-phospho-cyclic ADP-ribose + nicotinamide</text>
        <dbReference type="Rhea" id="RHEA:38603"/>
        <dbReference type="ChEBI" id="CHEBI:17154"/>
        <dbReference type="ChEBI" id="CHEBI:58349"/>
        <dbReference type="ChEBI" id="CHEBI:75970"/>
    </reaction>
</comment>
<comment type="catalytic activity">
    <reaction evidence="14">
        <text>nicotinate + NADP(+) = nicotinate-adenine dinucleotide phosphate + nicotinamide</text>
        <dbReference type="Rhea" id="RHEA:38599"/>
        <dbReference type="ChEBI" id="CHEBI:17154"/>
        <dbReference type="ChEBI" id="CHEBI:32544"/>
        <dbReference type="ChEBI" id="CHEBI:58349"/>
        <dbReference type="ChEBI" id="CHEBI:75967"/>
        <dbReference type="EC" id="2.4.99.20"/>
    </reaction>
    <physiologicalReaction direction="left-to-right" evidence="14">
        <dbReference type="Rhea" id="RHEA:38600"/>
    </physiologicalReaction>
</comment>
<comment type="activity regulation">
    <text evidence="8">ATP inhibits the cADPR hydrolyzing activity.</text>
</comment>
<comment type="biophysicochemical properties">
    <phDependence>
        <text evidence="3">Optimum pH for NAADP(+) production is 5.0 from either substrate, activity is much higher at pH 5.0 than 7.4.</text>
    </phDependence>
</comment>
<comment type="subunit">
    <text evidence="13">Homodimer.</text>
</comment>
<comment type="subcellular location">
    <subcellularLocation>
        <location evidence="6">Cell surface</location>
    </subcellularLocation>
    <subcellularLocation>
        <location evidence="8">Membrane</location>
        <topology>Single-pass type II membrane protein</topology>
    </subcellularLocation>
</comment>
<comment type="alternative products">
    <event type="alternative splicing"/>
    <isoform>
        <id>P28907-1</id>
        <name>1</name>
        <sequence type="displayed"/>
    </isoform>
    <isoform>
        <id>P28907-2</id>
        <name>2</name>
        <sequence type="described" ref="VSP_000707 VSP_000708"/>
    </isoform>
</comment>
<comment type="tissue specificity">
    <text evidence="8 9">Expressed at high levels in pancreas, liver, kidney, brain, testis, ovary, placenta, malignant lymphoma and neuroblastoma.</text>
</comment>
<comment type="developmental stage">
    <text>Preferentially expressed at both early and late stages of the B and T-cell maturation. It is also detected on erythroid and myeloid progenitors in bone marrow, where the level of surface expression was shown to decrease during differentiation of blast-forming unit E to colony-forming unit E.</text>
</comment>
<comment type="miscellaneous">
    <text evidence="6">A cell surface antigen recognized in lymophocytes by multiple mAbs.</text>
</comment>
<comment type="miscellaneous">
    <molecule>Isoform 2</molecule>
    <text evidence="12">May be produced at very low levels due to a premature stop codon in the mRNA, leading to nonsense-mediated mRNA decay.</text>
</comment>
<comment type="similarity">
    <text evidence="12">Belongs to the ADP-ribosyl cyclase family.</text>
</comment>
<comment type="online information" name="Wikipedia">
    <link uri="https://en.wikipedia.org/wiki/CD38"/>
    <text>CD38 entry</text>
</comment>
<comment type="online information" name="Atlas of Genetics and Cytogenetics in Oncology and Haematology">
    <link uri="https://atlasgeneticsoncology.org/gene/978/CD38"/>
</comment>
<dbReference type="EC" id="3.2.2.-" evidence="7 8"/>
<dbReference type="EC" id="3.2.2.6" evidence="8"/>
<dbReference type="EC" id="2.4.99.20" evidence="14"/>
<dbReference type="EMBL" id="M34461">
    <property type="protein sequence ID" value="AAA68482.1"/>
    <property type="molecule type" value="mRNA"/>
</dbReference>
<dbReference type="EMBL" id="D84276">
    <property type="protein sequence ID" value="BAA18964.1"/>
    <property type="molecule type" value="mRNA"/>
</dbReference>
<dbReference type="EMBL" id="D84277">
    <property type="protein sequence ID" value="BAA18965.1"/>
    <property type="molecule type" value="mRNA"/>
</dbReference>
<dbReference type="EMBL" id="D84284">
    <property type="protein sequence ID" value="BAA18966.1"/>
    <property type="molecule type" value="Genomic_DNA"/>
</dbReference>
<dbReference type="EMBL" id="BC007964">
    <property type="protein sequence ID" value="AAH07964.1"/>
    <property type="molecule type" value="mRNA"/>
</dbReference>
<dbReference type="CCDS" id="CCDS3417.1">
    <molecule id="P28907-1"/>
</dbReference>
<dbReference type="PIR" id="A43521">
    <property type="entry name" value="A43521"/>
</dbReference>
<dbReference type="RefSeq" id="NP_001766.2">
    <molecule id="P28907-1"/>
    <property type="nucleotide sequence ID" value="NM_001775.3"/>
</dbReference>
<dbReference type="PDB" id="1YH3">
    <property type="method" value="X-ray"/>
    <property type="resolution" value="1.91 A"/>
    <property type="chains" value="A/B=45-300"/>
</dbReference>
<dbReference type="PDB" id="1ZVM">
    <property type="method" value="X-ray"/>
    <property type="resolution" value="2.20 A"/>
    <property type="chains" value="A/B/C/D=45-300"/>
</dbReference>
<dbReference type="PDB" id="2EF1">
    <property type="method" value="X-ray"/>
    <property type="resolution" value="2.40 A"/>
    <property type="chains" value="A/B=45-300"/>
</dbReference>
<dbReference type="PDB" id="2HCT">
    <property type="method" value="X-ray"/>
    <property type="resolution" value="1.95 A"/>
    <property type="chains" value="A/B=45-300"/>
</dbReference>
<dbReference type="PDB" id="2I65">
    <property type="method" value="X-ray"/>
    <property type="resolution" value="1.90 A"/>
    <property type="chains" value="A/B=45-300"/>
</dbReference>
<dbReference type="PDB" id="2I66">
    <property type="method" value="X-ray"/>
    <property type="resolution" value="1.70 A"/>
    <property type="chains" value="A/B=45-300"/>
</dbReference>
<dbReference type="PDB" id="2I67">
    <property type="method" value="X-ray"/>
    <property type="resolution" value="1.71 A"/>
    <property type="chains" value="A/B=45-300"/>
</dbReference>
<dbReference type="PDB" id="2O3Q">
    <property type="method" value="X-ray"/>
    <property type="resolution" value="1.98 A"/>
    <property type="chains" value="A/B=45-300"/>
</dbReference>
<dbReference type="PDB" id="2O3R">
    <property type="method" value="X-ray"/>
    <property type="resolution" value="1.75 A"/>
    <property type="chains" value="A/B=45-300"/>
</dbReference>
<dbReference type="PDB" id="2O3S">
    <property type="method" value="X-ray"/>
    <property type="resolution" value="1.50 A"/>
    <property type="chains" value="A/B=45-300"/>
</dbReference>
<dbReference type="PDB" id="2O3T">
    <property type="method" value="X-ray"/>
    <property type="resolution" value="1.68 A"/>
    <property type="chains" value="A/B=45-300"/>
</dbReference>
<dbReference type="PDB" id="2O3U">
    <property type="method" value="X-ray"/>
    <property type="resolution" value="2.11 A"/>
    <property type="chains" value="A/B=45-300"/>
</dbReference>
<dbReference type="PDB" id="2PGJ">
    <property type="method" value="X-ray"/>
    <property type="resolution" value="1.71 A"/>
    <property type="chains" value="A/B=45-300"/>
</dbReference>
<dbReference type="PDB" id="2PGL">
    <property type="method" value="X-ray"/>
    <property type="resolution" value="1.76 A"/>
    <property type="chains" value="A/B=45-300"/>
</dbReference>
<dbReference type="PDB" id="3DZF">
    <property type="method" value="X-ray"/>
    <property type="resolution" value="2.01 A"/>
    <property type="chains" value="A/B/C/D/E/F=45-300"/>
</dbReference>
<dbReference type="PDB" id="3DZG">
    <property type="method" value="X-ray"/>
    <property type="resolution" value="1.65 A"/>
    <property type="chains" value="A/B=45-300"/>
</dbReference>
<dbReference type="PDB" id="3DZH">
    <property type="method" value="X-ray"/>
    <property type="resolution" value="1.60 A"/>
    <property type="chains" value="A/B=45-300"/>
</dbReference>
<dbReference type="PDB" id="3DZI">
    <property type="method" value="X-ray"/>
    <property type="resolution" value="1.73 A"/>
    <property type="chains" value="A/B=45-300"/>
</dbReference>
<dbReference type="PDB" id="3DZJ">
    <property type="method" value="X-ray"/>
    <property type="resolution" value="1.90 A"/>
    <property type="chains" value="A/B=45-300"/>
</dbReference>
<dbReference type="PDB" id="3DZK">
    <property type="method" value="X-ray"/>
    <property type="resolution" value="1.81 A"/>
    <property type="chains" value="A/B=45-300"/>
</dbReference>
<dbReference type="PDB" id="3F6Y">
    <property type="method" value="X-ray"/>
    <property type="resolution" value="1.45 A"/>
    <property type="chains" value="A=45-300"/>
</dbReference>
<dbReference type="PDB" id="3I9M">
    <property type="method" value="X-ray"/>
    <property type="resolution" value="1.75 A"/>
    <property type="chains" value="A/B=45-300"/>
</dbReference>
<dbReference type="PDB" id="3I9N">
    <property type="method" value="X-ray"/>
    <property type="resolution" value="2.01 A"/>
    <property type="chains" value="A/B=45-300"/>
</dbReference>
<dbReference type="PDB" id="3OFS">
    <property type="method" value="X-ray"/>
    <property type="resolution" value="2.20 A"/>
    <property type="chains" value="A/B/C/D/E/F=46-300"/>
</dbReference>
<dbReference type="PDB" id="3RAJ">
    <property type="method" value="X-ray"/>
    <property type="resolution" value="3.04 A"/>
    <property type="chains" value="A=46-300"/>
</dbReference>
<dbReference type="PDB" id="3ROK">
    <property type="method" value="X-ray"/>
    <property type="resolution" value="1.65 A"/>
    <property type="chains" value="A/B=45-296"/>
</dbReference>
<dbReference type="PDB" id="3ROM">
    <property type="method" value="X-ray"/>
    <property type="resolution" value="2.04 A"/>
    <property type="chains" value="A/B=45-296"/>
</dbReference>
<dbReference type="PDB" id="3ROP">
    <property type="method" value="X-ray"/>
    <property type="resolution" value="1.94 A"/>
    <property type="chains" value="A/B=45-296"/>
</dbReference>
<dbReference type="PDB" id="3ROQ">
    <property type="method" value="X-ray"/>
    <property type="resolution" value="2.10 A"/>
    <property type="chains" value="A/B=45-296"/>
</dbReference>
<dbReference type="PDB" id="3U4H">
    <property type="method" value="X-ray"/>
    <property type="resolution" value="1.88 A"/>
    <property type="chains" value="A/B=45-300"/>
</dbReference>
<dbReference type="PDB" id="3U4I">
    <property type="method" value="X-ray"/>
    <property type="resolution" value="2.12 A"/>
    <property type="chains" value="A/B=45-300"/>
</dbReference>
<dbReference type="PDB" id="4CMH">
    <property type="method" value="X-ray"/>
    <property type="resolution" value="1.53 A"/>
    <property type="chains" value="A=45-300"/>
</dbReference>
<dbReference type="PDB" id="4F45">
    <property type="method" value="X-ray"/>
    <property type="resolution" value="2.10 A"/>
    <property type="chains" value="A/B=46-300"/>
</dbReference>
<dbReference type="PDB" id="4F46">
    <property type="method" value="X-ray"/>
    <property type="resolution" value="1.69 A"/>
    <property type="chains" value="A/B=46-300"/>
</dbReference>
<dbReference type="PDB" id="4OGW">
    <property type="method" value="X-ray"/>
    <property type="resolution" value="2.05 A"/>
    <property type="chains" value="A=46-300"/>
</dbReference>
<dbReference type="PDB" id="4TMF">
    <property type="method" value="X-ray"/>
    <property type="resolution" value="2.05 A"/>
    <property type="chains" value="A/B=50-300"/>
</dbReference>
<dbReference type="PDB" id="4XJS">
    <property type="method" value="X-ray"/>
    <property type="resolution" value="2.80 A"/>
    <property type="chains" value="A=46-300"/>
</dbReference>
<dbReference type="PDB" id="4XJT">
    <property type="method" value="X-ray"/>
    <property type="resolution" value="2.60 A"/>
    <property type="chains" value="A=46-300"/>
</dbReference>
<dbReference type="PDB" id="5F1K">
    <property type="method" value="X-ray"/>
    <property type="resolution" value="2.30 A"/>
    <property type="chains" value="A/B=45-300"/>
</dbReference>
<dbReference type="PDB" id="5F1O">
    <property type="method" value="X-ray"/>
    <property type="resolution" value="2.20 A"/>
    <property type="chains" value="A=46-300"/>
</dbReference>
<dbReference type="PDB" id="5F21">
    <property type="method" value="X-ray"/>
    <property type="resolution" value="1.90 A"/>
    <property type="chains" value="A=46-300"/>
</dbReference>
<dbReference type="PDB" id="6EDR">
    <property type="method" value="X-ray"/>
    <property type="resolution" value="2.40 A"/>
    <property type="chains" value="A/B=45-300"/>
</dbReference>
<dbReference type="PDB" id="6VUA">
    <property type="method" value="X-ray"/>
    <property type="resolution" value="1.50 A"/>
    <property type="chains" value="A/B=45-300"/>
</dbReference>
<dbReference type="PDB" id="7DHA">
    <property type="method" value="X-ray"/>
    <property type="resolution" value="2.55 A"/>
    <property type="chains" value="A=45-300"/>
</dbReference>
<dbReference type="PDB" id="7DUO">
    <property type="method" value="X-ray"/>
    <property type="resolution" value="2.81 A"/>
    <property type="chains" value="B=57-285"/>
</dbReference>
<dbReference type="PDB" id="7VKE">
    <property type="method" value="X-ray"/>
    <property type="resolution" value="1.90 A"/>
    <property type="chains" value="A=45-300"/>
</dbReference>
<dbReference type="PDB" id="8BYU">
    <property type="method" value="X-ray"/>
    <property type="resolution" value="1.85 A"/>
    <property type="chains" value="A=45-300"/>
</dbReference>
<dbReference type="PDB" id="8D0M">
    <property type="method" value="X-ray"/>
    <property type="resolution" value="2.04 A"/>
    <property type="chains" value="A=45-300"/>
</dbReference>
<dbReference type="PDB" id="8IL3">
    <property type="method" value="EM"/>
    <property type="resolution" value="3.86 A"/>
    <property type="chains" value="C=48-279"/>
</dbReference>
<dbReference type="PDB" id="8P8C">
    <property type="method" value="X-ray"/>
    <property type="resolution" value="1.65 A"/>
    <property type="chains" value="A=45-300"/>
</dbReference>
<dbReference type="PDB" id="8VAU">
    <property type="method" value="X-ray"/>
    <property type="resolution" value="2.10 A"/>
    <property type="chains" value="A/B=45-300"/>
</dbReference>
<dbReference type="PDB" id="9GOX">
    <property type="method" value="X-ray"/>
    <property type="resolution" value="1.84 A"/>
    <property type="chains" value="A=45-300"/>
</dbReference>
<dbReference type="PDB" id="9GOY">
    <property type="method" value="X-ray"/>
    <property type="resolution" value="2.70 A"/>
    <property type="chains" value="A=45-300"/>
</dbReference>
<dbReference type="PDBsum" id="1YH3"/>
<dbReference type="PDBsum" id="1ZVM"/>
<dbReference type="PDBsum" id="2EF1"/>
<dbReference type="PDBsum" id="2HCT"/>
<dbReference type="PDBsum" id="2I65"/>
<dbReference type="PDBsum" id="2I66"/>
<dbReference type="PDBsum" id="2I67"/>
<dbReference type="PDBsum" id="2O3Q"/>
<dbReference type="PDBsum" id="2O3R"/>
<dbReference type="PDBsum" id="2O3S"/>
<dbReference type="PDBsum" id="2O3T"/>
<dbReference type="PDBsum" id="2O3U"/>
<dbReference type="PDBsum" id="2PGJ"/>
<dbReference type="PDBsum" id="2PGL"/>
<dbReference type="PDBsum" id="3DZF"/>
<dbReference type="PDBsum" id="3DZG"/>
<dbReference type="PDBsum" id="3DZH"/>
<dbReference type="PDBsum" id="3DZI"/>
<dbReference type="PDBsum" id="3DZJ"/>
<dbReference type="PDBsum" id="3DZK"/>
<dbReference type="PDBsum" id="3F6Y"/>
<dbReference type="PDBsum" id="3I9M"/>
<dbReference type="PDBsum" id="3I9N"/>
<dbReference type="PDBsum" id="3OFS"/>
<dbReference type="PDBsum" id="3RAJ"/>
<dbReference type="PDBsum" id="3ROK"/>
<dbReference type="PDBsum" id="3ROM"/>
<dbReference type="PDBsum" id="3ROP"/>
<dbReference type="PDBsum" id="3ROQ"/>
<dbReference type="PDBsum" id="3U4H"/>
<dbReference type="PDBsum" id="3U4I"/>
<dbReference type="PDBsum" id="4CMH"/>
<dbReference type="PDBsum" id="4F45"/>
<dbReference type="PDBsum" id="4F46"/>
<dbReference type="PDBsum" id="4OGW"/>
<dbReference type="PDBsum" id="4TMF"/>
<dbReference type="PDBsum" id="4XJS"/>
<dbReference type="PDBsum" id="4XJT"/>
<dbReference type="PDBsum" id="5F1K"/>
<dbReference type="PDBsum" id="5F1O"/>
<dbReference type="PDBsum" id="5F21"/>
<dbReference type="PDBsum" id="6EDR"/>
<dbReference type="PDBsum" id="6VUA"/>
<dbReference type="PDBsum" id="7DHA"/>
<dbReference type="PDBsum" id="7DUO"/>
<dbReference type="PDBsum" id="7VKE"/>
<dbReference type="PDBsum" id="8BYU"/>
<dbReference type="PDBsum" id="8D0M"/>
<dbReference type="PDBsum" id="8IL3"/>
<dbReference type="PDBsum" id="8P8C"/>
<dbReference type="PDBsum" id="8VAU"/>
<dbReference type="PDBsum" id="9GOX"/>
<dbReference type="PDBsum" id="9GOY"/>
<dbReference type="EMDB" id="EMD-35526"/>
<dbReference type="SMR" id="P28907"/>
<dbReference type="BioGRID" id="107390">
    <property type="interactions" value="11"/>
</dbReference>
<dbReference type="CORUM" id="P28907"/>
<dbReference type="FunCoup" id="P28907">
    <property type="interactions" value="710"/>
</dbReference>
<dbReference type="IntAct" id="P28907">
    <property type="interactions" value="5"/>
</dbReference>
<dbReference type="STRING" id="9606.ENSP00000226279"/>
<dbReference type="BindingDB" id="P28907"/>
<dbReference type="ChEMBL" id="CHEMBL4660"/>
<dbReference type="DrugBank" id="DB09331">
    <property type="generic name" value="Daratumumab"/>
</dbReference>
<dbReference type="DrugBank" id="DB14811">
    <property type="generic name" value="Isatuximab"/>
</dbReference>
<dbReference type="DrugBank" id="DB16370">
    <property type="generic name" value="Mezagitamab"/>
</dbReference>
<dbReference type="DrugCentral" id="P28907"/>
<dbReference type="GuidetoPHARMACOLOGY" id="2766"/>
<dbReference type="GlyConnect" id="997">
    <property type="glycosylation" value="1 N-Linked glycan (1 site)"/>
</dbReference>
<dbReference type="GlyCosmos" id="P28907">
    <property type="glycosylation" value="4 sites, 1 glycan"/>
</dbReference>
<dbReference type="GlyGen" id="P28907">
    <property type="glycosylation" value="5 sites, 24 N-linked glycans (3 sites)"/>
</dbReference>
<dbReference type="iPTMnet" id="P28907"/>
<dbReference type="PhosphoSitePlus" id="P28907"/>
<dbReference type="SwissPalm" id="P28907"/>
<dbReference type="BioMuta" id="CD38"/>
<dbReference type="DMDM" id="55977782"/>
<dbReference type="jPOST" id="P28907"/>
<dbReference type="MassIVE" id="P28907"/>
<dbReference type="PaxDb" id="9606-ENSP00000226279"/>
<dbReference type="PeptideAtlas" id="P28907"/>
<dbReference type="ProteomicsDB" id="54507">
    <molecule id="P28907-1"/>
</dbReference>
<dbReference type="ProteomicsDB" id="54508">
    <molecule id="P28907-2"/>
</dbReference>
<dbReference type="ABCD" id="P28907">
    <property type="antibodies" value="65 sequenced antibodies"/>
</dbReference>
<dbReference type="Antibodypedia" id="9844">
    <property type="antibodies" value="2898 antibodies from 55 providers"/>
</dbReference>
<dbReference type="CPTC" id="P28907">
    <property type="antibodies" value="1 antibody"/>
</dbReference>
<dbReference type="DNASU" id="952"/>
<dbReference type="Ensembl" id="ENST00000226279.8">
    <molecule id="P28907-1"/>
    <property type="protein sequence ID" value="ENSP00000226279.2"/>
    <property type="gene ID" value="ENSG00000004468.13"/>
</dbReference>
<dbReference type="Ensembl" id="ENST00000502843.5">
    <molecule id="P28907-2"/>
    <property type="protein sequence ID" value="ENSP00000427277.1"/>
    <property type="gene ID" value="ENSG00000004468.13"/>
</dbReference>
<dbReference type="GeneID" id="952"/>
<dbReference type="KEGG" id="hsa:952"/>
<dbReference type="MANE-Select" id="ENST00000226279.8">
    <property type="protein sequence ID" value="ENSP00000226279.2"/>
    <property type="RefSeq nucleotide sequence ID" value="NM_001775.4"/>
    <property type="RefSeq protein sequence ID" value="NP_001766.2"/>
</dbReference>
<dbReference type="UCSC" id="uc003gol.2">
    <molecule id="P28907-1"/>
    <property type="organism name" value="human"/>
</dbReference>
<dbReference type="AGR" id="HGNC:1667"/>
<dbReference type="CTD" id="952"/>
<dbReference type="DisGeNET" id="952"/>
<dbReference type="GeneCards" id="CD38"/>
<dbReference type="HGNC" id="HGNC:1667">
    <property type="gene designation" value="CD38"/>
</dbReference>
<dbReference type="HPA" id="ENSG00000004468">
    <property type="expression patterns" value="Tissue enhanced (lymphoid)"/>
</dbReference>
<dbReference type="MIM" id="107270">
    <property type="type" value="gene"/>
</dbReference>
<dbReference type="neXtProt" id="NX_P28907"/>
<dbReference type="OpenTargets" id="ENSG00000004468"/>
<dbReference type="PharmGKB" id="PA26214"/>
<dbReference type="VEuPathDB" id="HostDB:ENSG00000004468"/>
<dbReference type="eggNOG" id="ENOG502S1HV">
    <property type="taxonomic scope" value="Eukaryota"/>
</dbReference>
<dbReference type="GeneTree" id="ENSGT00390000017291"/>
<dbReference type="HOGENOM" id="CLU_2025937_0_0_1"/>
<dbReference type="InParanoid" id="P28907"/>
<dbReference type="OMA" id="SCQTCAN"/>
<dbReference type="OrthoDB" id="10028716at2759"/>
<dbReference type="PAN-GO" id="P28907">
    <property type="GO annotations" value="4 GO annotations based on evolutionary models"/>
</dbReference>
<dbReference type="PhylomeDB" id="P28907"/>
<dbReference type="TreeFam" id="TF332530"/>
<dbReference type="BioCyc" id="MetaCyc:HS00103-MONOMER"/>
<dbReference type="BRENDA" id="2.4.99.20">
    <property type="organism ID" value="2681"/>
</dbReference>
<dbReference type="BRENDA" id="3.2.2.5">
    <property type="organism ID" value="2681"/>
</dbReference>
<dbReference type="BRENDA" id="3.2.2.6">
    <property type="organism ID" value="2681"/>
</dbReference>
<dbReference type="PathwayCommons" id="P28907"/>
<dbReference type="Reactome" id="R-HSA-196807">
    <property type="pathway name" value="Nicotinate metabolism"/>
</dbReference>
<dbReference type="SABIO-RK" id="P28907"/>
<dbReference type="SignaLink" id="P28907"/>
<dbReference type="SIGNOR" id="P28907"/>
<dbReference type="BioGRID-ORCS" id="952">
    <property type="hits" value="11 hits in 1159 CRISPR screens"/>
</dbReference>
<dbReference type="ChiTaRS" id="CD38">
    <property type="organism name" value="human"/>
</dbReference>
<dbReference type="EvolutionaryTrace" id="P28907"/>
<dbReference type="GeneWiki" id="CD38"/>
<dbReference type="GenomeRNAi" id="952"/>
<dbReference type="Pharos" id="P28907">
    <property type="development level" value="Tclin"/>
</dbReference>
<dbReference type="PRO" id="PR:P28907"/>
<dbReference type="Proteomes" id="UP000005640">
    <property type="component" value="Chromosome 4"/>
</dbReference>
<dbReference type="RNAct" id="P28907">
    <property type="molecule type" value="protein"/>
</dbReference>
<dbReference type="Bgee" id="ENSG00000004468">
    <property type="expression patterns" value="Expressed in seminal vesicle and 131 other cell types or tissues"/>
</dbReference>
<dbReference type="ExpressionAtlas" id="P28907">
    <property type="expression patterns" value="baseline and differential"/>
</dbReference>
<dbReference type="GO" id="GO:0016323">
    <property type="term" value="C:basolateral plasma membrane"/>
    <property type="evidence" value="ECO:0007669"/>
    <property type="project" value="Ensembl"/>
</dbReference>
<dbReference type="GO" id="GO:0009986">
    <property type="term" value="C:cell surface"/>
    <property type="evidence" value="ECO:0007669"/>
    <property type="project" value="UniProtKB-SubCell"/>
</dbReference>
<dbReference type="GO" id="GO:0070062">
    <property type="term" value="C:extracellular exosome"/>
    <property type="evidence" value="ECO:0007005"/>
    <property type="project" value="UniProtKB"/>
</dbReference>
<dbReference type="GO" id="GO:0016020">
    <property type="term" value="C:membrane"/>
    <property type="evidence" value="ECO:0000304"/>
    <property type="project" value="ProtInc"/>
</dbReference>
<dbReference type="GO" id="GO:0031965">
    <property type="term" value="C:nuclear membrane"/>
    <property type="evidence" value="ECO:0007669"/>
    <property type="project" value="Ensembl"/>
</dbReference>
<dbReference type="GO" id="GO:0005886">
    <property type="term" value="C:plasma membrane"/>
    <property type="evidence" value="ECO:0000314"/>
    <property type="project" value="HPA"/>
</dbReference>
<dbReference type="GO" id="GO:0042802">
    <property type="term" value="F:identical protein binding"/>
    <property type="evidence" value="ECO:0007669"/>
    <property type="project" value="Ensembl"/>
</dbReference>
<dbReference type="GO" id="GO:0061809">
    <property type="term" value="F:NAD+ nucleosidase activity, cyclic ADP-ribose generating"/>
    <property type="evidence" value="ECO:0000304"/>
    <property type="project" value="Reactome"/>
</dbReference>
<dbReference type="GO" id="GO:0016849">
    <property type="term" value="F:phosphorus-oxygen lyase activity"/>
    <property type="evidence" value="ECO:0000318"/>
    <property type="project" value="GO_Central"/>
</dbReference>
<dbReference type="GO" id="GO:0016740">
    <property type="term" value="F:transferase activity"/>
    <property type="evidence" value="ECO:0007669"/>
    <property type="project" value="UniProtKB-KW"/>
</dbReference>
<dbReference type="GO" id="GO:0097190">
    <property type="term" value="P:apoptotic signaling pathway"/>
    <property type="evidence" value="ECO:0000304"/>
    <property type="project" value="ProtInc"/>
</dbReference>
<dbReference type="GO" id="GO:0014824">
    <property type="term" value="P:artery smooth muscle contraction"/>
    <property type="evidence" value="ECO:0007669"/>
    <property type="project" value="Ensembl"/>
</dbReference>
<dbReference type="GO" id="GO:0042100">
    <property type="term" value="P:B cell proliferation"/>
    <property type="evidence" value="ECO:0007669"/>
    <property type="project" value="Ensembl"/>
</dbReference>
<dbReference type="GO" id="GO:0050853">
    <property type="term" value="P:B cell receptor signaling pathway"/>
    <property type="evidence" value="ECO:0000315"/>
    <property type="project" value="UniProtKB"/>
</dbReference>
<dbReference type="GO" id="GO:0007565">
    <property type="term" value="P:female pregnancy"/>
    <property type="evidence" value="ECO:0007669"/>
    <property type="project" value="Ensembl"/>
</dbReference>
<dbReference type="GO" id="GO:0060292">
    <property type="term" value="P:long-term synaptic depression"/>
    <property type="evidence" value="ECO:0007669"/>
    <property type="project" value="Ensembl"/>
</dbReference>
<dbReference type="GO" id="GO:0019674">
    <property type="term" value="P:NAD metabolic process"/>
    <property type="evidence" value="ECO:0000304"/>
    <property type="project" value="Reactome"/>
</dbReference>
<dbReference type="GO" id="GO:0043066">
    <property type="term" value="P:negative regulation of apoptotic process"/>
    <property type="evidence" value="ECO:0000315"/>
    <property type="project" value="UniProtKB"/>
</dbReference>
<dbReference type="GO" id="GO:0045779">
    <property type="term" value="P:negative regulation of bone resorption"/>
    <property type="evidence" value="ECO:0007669"/>
    <property type="project" value="Ensembl"/>
</dbReference>
<dbReference type="GO" id="GO:0045892">
    <property type="term" value="P:negative regulation of DNA-templated transcription"/>
    <property type="evidence" value="ECO:0000315"/>
    <property type="project" value="UniProtKB"/>
</dbReference>
<dbReference type="GO" id="GO:0010977">
    <property type="term" value="P:negative regulation of neuron projection development"/>
    <property type="evidence" value="ECO:0007669"/>
    <property type="project" value="Ensembl"/>
</dbReference>
<dbReference type="GO" id="GO:0030890">
    <property type="term" value="P:positive regulation of B cell proliferation"/>
    <property type="evidence" value="ECO:0000315"/>
    <property type="project" value="UniProtKB"/>
</dbReference>
<dbReference type="GO" id="GO:0030307">
    <property type="term" value="P:positive regulation of cell growth"/>
    <property type="evidence" value="ECO:0007669"/>
    <property type="project" value="Ensembl"/>
</dbReference>
<dbReference type="GO" id="GO:0007204">
    <property type="term" value="P:positive regulation of cytosolic calcium ion concentration"/>
    <property type="evidence" value="ECO:0007669"/>
    <property type="project" value="Ensembl"/>
</dbReference>
<dbReference type="GO" id="GO:0045893">
    <property type="term" value="P:positive regulation of DNA-templated transcription"/>
    <property type="evidence" value="ECO:0000315"/>
    <property type="project" value="UniProtKB"/>
</dbReference>
<dbReference type="GO" id="GO:0032024">
    <property type="term" value="P:positive regulation of insulin secretion"/>
    <property type="evidence" value="ECO:0007669"/>
    <property type="project" value="Ensembl"/>
</dbReference>
<dbReference type="GO" id="GO:0045907">
    <property type="term" value="P:positive regulation of vasoconstriction"/>
    <property type="evidence" value="ECO:0007669"/>
    <property type="project" value="Ensembl"/>
</dbReference>
<dbReference type="GO" id="GO:0032355">
    <property type="term" value="P:response to estradiol"/>
    <property type="evidence" value="ECO:0007669"/>
    <property type="project" value="Ensembl"/>
</dbReference>
<dbReference type="GO" id="GO:0033194">
    <property type="term" value="P:response to hydroperoxide"/>
    <property type="evidence" value="ECO:0007669"/>
    <property type="project" value="Ensembl"/>
</dbReference>
<dbReference type="GO" id="GO:0001666">
    <property type="term" value="P:response to hypoxia"/>
    <property type="evidence" value="ECO:0007669"/>
    <property type="project" value="Ensembl"/>
</dbReference>
<dbReference type="GO" id="GO:0070555">
    <property type="term" value="P:response to interleukin-1"/>
    <property type="evidence" value="ECO:0007669"/>
    <property type="project" value="Ensembl"/>
</dbReference>
<dbReference type="GO" id="GO:0032570">
    <property type="term" value="P:response to progesterone"/>
    <property type="evidence" value="ECO:0007669"/>
    <property type="project" value="Ensembl"/>
</dbReference>
<dbReference type="GO" id="GO:0032526">
    <property type="term" value="P:response to retinoic acid"/>
    <property type="evidence" value="ECO:0007669"/>
    <property type="project" value="Ensembl"/>
</dbReference>
<dbReference type="GO" id="GO:0009410">
    <property type="term" value="P:response to xenobiotic stimulus"/>
    <property type="evidence" value="ECO:0000315"/>
    <property type="project" value="UniProtKB"/>
</dbReference>
<dbReference type="GO" id="GO:0007165">
    <property type="term" value="P:signal transduction"/>
    <property type="evidence" value="ECO:0000303"/>
    <property type="project" value="ProtInc"/>
</dbReference>
<dbReference type="CDD" id="cd04759">
    <property type="entry name" value="Rib_hydrolase"/>
    <property type="match status" value="1"/>
</dbReference>
<dbReference type="FunFam" id="3.40.50.720:FF:000436">
    <property type="entry name" value="ADP-ribosyl cyclase/cyclic ADP-ribose hydrolase 1"/>
    <property type="match status" value="1"/>
</dbReference>
<dbReference type="Gene3D" id="1.20.82.10">
    <property type="entry name" value="ADP Ribosyl Cyclase, Chain A, domain 1"/>
    <property type="match status" value="1"/>
</dbReference>
<dbReference type="Gene3D" id="3.40.50.720">
    <property type="entry name" value="NAD(P)-binding Rossmann-like Domain"/>
    <property type="match status" value="1"/>
</dbReference>
<dbReference type="InterPro" id="IPR003193">
    <property type="entry name" value="ADP-ribosyl_cyclase"/>
</dbReference>
<dbReference type="PANTHER" id="PTHR10912">
    <property type="entry name" value="ADP-RIBOSYL CYCLASE"/>
    <property type="match status" value="1"/>
</dbReference>
<dbReference type="PANTHER" id="PTHR10912:SF5">
    <property type="entry name" value="ADP-RIBOSYL CYCLASE_CYCLIC ADP-RIBOSE HYDROLASE 1"/>
    <property type="match status" value="1"/>
</dbReference>
<dbReference type="Pfam" id="PF02267">
    <property type="entry name" value="Rib_hydrolayse"/>
    <property type="match status" value="1"/>
</dbReference>
<dbReference type="SUPFAM" id="SSF52309">
    <property type="entry name" value="N-(deoxy)ribosyltransferase-like"/>
    <property type="match status" value="1"/>
</dbReference>
<keyword id="KW-0002">3D-structure</keyword>
<keyword id="KW-0025">Alternative splicing</keyword>
<keyword id="KW-0219">Diabetes mellitus</keyword>
<keyword id="KW-1015">Disulfide bond</keyword>
<keyword id="KW-0325">Glycoprotein</keyword>
<keyword id="KW-0378">Hydrolase</keyword>
<keyword id="KW-0472">Membrane</keyword>
<keyword id="KW-0520">NAD</keyword>
<keyword id="KW-0521">NADP</keyword>
<keyword id="KW-1267">Proteomics identification</keyword>
<keyword id="KW-0675">Receptor</keyword>
<keyword id="KW-1185">Reference proteome</keyword>
<keyword id="KW-0735">Signal-anchor</keyword>
<keyword id="KW-0808">Transferase</keyword>
<keyword id="KW-0812">Transmembrane</keyword>
<keyword id="KW-1133">Transmembrane helix</keyword>
<name>CD38_HUMAN</name>